<accession>Q7RTR8</accession>
<accession>A2RRP4</accession>
<accession>Q645X0</accession>
<reference key="1">
    <citation type="journal article" date="2005" name="Mol. Biol. Evol.">
        <title>Evolution of bitter taste receptors in humans and apes.</title>
        <authorList>
            <person name="Fischer A."/>
            <person name="Gilad Y."/>
            <person name="Man O."/>
            <person name="Paeaebo S."/>
        </authorList>
    </citation>
    <scope>NUCLEOTIDE SEQUENCE [GENOMIC DNA]</scope>
</reference>
<reference key="2">
    <citation type="journal article" date="2006" name="Nature">
        <title>The finished DNA sequence of human chromosome 12.</title>
        <authorList>
            <person name="Scherer S.E."/>
            <person name="Muzny D.M."/>
            <person name="Buhay C.J."/>
            <person name="Chen R."/>
            <person name="Cree A."/>
            <person name="Ding Y."/>
            <person name="Dugan-Rocha S."/>
            <person name="Gill R."/>
            <person name="Gunaratne P."/>
            <person name="Harris R.A."/>
            <person name="Hawes A.C."/>
            <person name="Hernandez J."/>
            <person name="Hodgson A.V."/>
            <person name="Hume J."/>
            <person name="Jackson A."/>
            <person name="Khan Z.M."/>
            <person name="Kovar-Smith C."/>
            <person name="Lewis L.R."/>
            <person name="Lozado R.J."/>
            <person name="Metzker M.L."/>
            <person name="Milosavljevic A."/>
            <person name="Miner G.R."/>
            <person name="Montgomery K.T."/>
            <person name="Morgan M.B."/>
            <person name="Nazareth L.V."/>
            <person name="Scott G."/>
            <person name="Sodergren E."/>
            <person name="Song X.-Z."/>
            <person name="Steffen D."/>
            <person name="Lovering R.C."/>
            <person name="Wheeler D.A."/>
            <person name="Worley K.C."/>
            <person name="Yuan Y."/>
            <person name="Zhang Z."/>
            <person name="Adams C.Q."/>
            <person name="Ansari-Lari M.A."/>
            <person name="Ayele M."/>
            <person name="Brown M.J."/>
            <person name="Chen G."/>
            <person name="Chen Z."/>
            <person name="Clerc-Blankenburg K.P."/>
            <person name="Davis C."/>
            <person name="Delgado O."/>
            <person name="Dinh H.H."/>
            <person name="Draper H."/>
            <person name="Gonzalez-Garay M.L."/>
            <person name="Havlak P."/>
            <person name="Jackson L.R."/>
            <person name="Jacob L.S."/>
            <person name="Kelly S.H."/>
            <person name="Li L."/>
            <person name="Li Z."/>
            <person name="Liu J."/>
            <person name="Liu W."/>
            <person name="Lu J."/>
            <person name="Maheshwari M."/>
            <person name="Nguyen B.-V."/>
            <person name="Okwuonu G.O."/>
            <person name="Pasternak S."/>
            <person name="Perez L.M."/>
            <person name="Plopper F.J.H."/>
            <person name="Santibanez J."/>
            <person name="Shen H."/>
            <person name="Tabor P.E."/>
            <person name="Verduzco D."/>
            <person name="Waldron L."/>
            <person name="Wang Q."/>
            <person name="Williams G.A."/>
            <person name="Zhang J."/>
            <person name="Zhou J."/>
            <person name="Allen C.C."/>
            <person name="Amin A.G."/>
            <person name="Anyalebechi V."/>
            <person name="Bailey M."/>
            <person name="Barbaria J.A."/>
            <person name="Bimage K.E."/>
            <person name="Bryant N.P."/>
            <person name="Burch P.E."/>
            <person name="Burkett C.E."/>
            <person name="Burrell K.L."/>
            <person name="Calderon E."/>
            <person name="Cardenas V."/>
            <person name="Carter K."/>
            <person name="Casias K."/>
            <person name="Cavazos I."/>
            <person name="Cavazos S.R."/>
            <person name="Ceasar H."/>
            <person name="Chacko J."/>
            <person name="Chan S.N."/>
            <person name="Chavez D."/>
            <person name="Christopoulos C."/>
            <person name="Chu J."/>
            <person name="Cockrell R."/>
            <person name="Cox C.D."/>
            <person name="Dang M."/>
            <person name="Dathorne S.R."/>
            <person name="David R."/>
            <person name="Davis C.M."/>
            <person name="Davy-Carroll L."/>
            <person name="Deshazo D.R."/>
            <person name="Donlin J.E."/>
            <person name="D'Souza L."/>
            <person name="Eaves K.A."/>
            <person name="Egan A."/>
            <person name="Emery-Cohen A.J."/>
            <person name="Escotto M."/>
            <person name="Flagg N."/>
            <person name="Forbes L.D."/>
            <person name="Gabisi A.M."/>
            <person name="Garza M."/>
            <person name="Hamilton C."/>
            <person name="Henderson N."/>
            <person name="Hernandez O."/>
            <person name="Hines S."/>
            <person name="Hogues M.E."/>
            <person name="Huang M."/>
            <person name="Idlebird D.G."/>
            <person name="Johnson R."/>
            <person name="Jolivet A."/>
            <person name="Jones S."/>
            <person name="Kagan R."/>
            <person name="King L.M."/>
            <person name="Leal B."/>
            <person name="Lebow H."/>
            <person name="Lee S."/>
            <person name="LeVan J.M."/>
            <person name="Lewis L.C."/>
            <person name="London P."/>
            <person name="Lorensuhewa L.M."/>
            <person name="Loulseged H."/>
            <person name="Lovett D.A."/>
            <person name="Lucier A."/>
            <person name="Lucier R.L."/>
            <person name="Ma J."/>
            <person name="Madu R.C."/>
            <person name="Mapua P."/>
            <person name="Martindale A.D."/>
            <person name="Martinez E."/>
            <person name="Massey E."/>
            <person name="Mawhiney S."/>
            <person name="Meador M.G."/>
            <person name="Mendez S."/>
            <person name="Mercado C."/>
            <person name="Mercado I.C."/>
            <person name="Merritt C.E."/>
            <person name="Miner Z.L."/>
            <person name="Minja E."/>
            <person name="Mitchell T."/>
            <person name="Mohabbat F."/>
            <person name="Mohabbat K."/>
            <person name="Montgomery B."/>
            <person name="Moore N."/>
            <person name="Morris S."/>
            <person name="Munidasa M."/>
            <person name="Ngo R.N."/>
            <person name="Nguyen N.B."/>
            <person name="Nickerson E."/>
            <person name="Nwaokelemeh O.O."/>
            <person name="Nwokenkwo S."/>
            <person name="Obregon M."/>
            <person name="Oguh M."/>
            <person name="Oragunye N."/>
            <person name="Oviedo R.J."/>
            <person name="Parish B.J."/>
            <person name="Parker D.N."/>
            <person name="Parrish J."/>
            <person name="Parks K.L."/>
            <person name="Paul H.A."/>
            <person name="Payton B.A."/>
            <person name="Perez A."/>
            <person name="Perrin W."/>
            <person name="Pickens A."/>
            <person name="Primus E.L."/>
            <person name="Pu L.-L."/>
            <person name="Puazo M."/>
            <person name="Quiles M.M."/>
            <person name="Quiroz J.B."/>
            <person name="Rabata D."/>
            <person name="Reeves K."/>
            <person name="Ruiz S.J."/>
            <person name="Shao H."/>
            <person name="Sisson I."/>
            <person name="Sonaike T."/>
            <person name="Sorelle R.P."/>
            <person name="Sutton A.E."/>
            <person name="Svatek A.F."/>
            <person name="Svetz L.A."/>
            <person name="Tamerisa K.S."/>
            <person name="Taylor T.R."/>
            <person name="Teague B."/>
            <person name="Thomas N."/>
            <person name="Thorn R.D."/>
            <person name="Trejos Z.Y."/>
            <person name="Trevino B.K."/>
            <person name="Ukegbu O.N."/>
            <person name="Urban J.B."/>
            <person name="Vasquez L.I."/>
            <person name="Vera V.A."/>
            <person name="Villasana D.M."/>
            <person name="Wang L."/>
            <person name="Ward-Moore S."/>
            <person name="Warren J.T."/>
            <person name="Wei X."/>
            <person name="White F."/>
            <person name="Williamson A.L."/>
            <person name="Wleczyk R."/>
            <person name="Wooden H.S."/>
            <person name="Wooden S.H."/>
            <person name="Yen J."/>
            <person name="Yoon L."/>
            <person name="Yoon V."/>
            <person name="Zorrilla S.E."/>
            <person name="Nelson D."/>
            <person name="Kucherlapati R."/>
            <person name="Weinstock G."/>
            <person name="Gibbs R.A."/>
        </authorList>
    </citation>
    <scope>NUCLEOTIDE SEQUENCE [LARGE SCALE GENOMIC DNA]</scope>
    <scope>VARIANTS PHE-175 AND SER-196</scope>
</reference>
<reference key="3">
    <citation type="journal article" date="2004" name="Genome Res.">
        <title>The status, quality, and expansion of the NIH full-length cDNA project: the Mammalian Gene Collection (MGC).</title>
        <authorList>
            <consortium name="The MGC Project Team"/>
        </authorList>
    </citation>
    <scope>NUCLEOTIDE SEQUENCE [LARGE SCALE MRNA]</scope>
</reference>
<reference key="4">
    <citation type="journal article" date="2003" name="Mol. Biol. Evol.">
        <title>Adaptive diversification of bitter taste receptor genes in mammalian evolution.</title>
        <authorList>
            <person name="Shi P."/>
            <person name="Zhang J."/>
            <person name="Yang H."/>
            <person name="Zhang Y.-P."/>
        </authorList>
    </citation>
    <scope>IDENTIFICATION</scope>
</reference>
<comment type="function">
    <text evidence="1">Receptor that may play a role in the perception of bitterness and is gustducin-linked. May play a role in sensing the chemical composition of the gastrointestinal content. The activity of this receptor may stimulate alpha gustducin, mediate PLC-beta-2 activation and lead to the gating of TRPM5 (By similarity).</text>
</comment>
<comment type="subcellular location">
    <subcellularLocation>
        <location>Membrane</location>
        <topology>Multi-pass membrane protein</topology>
    </subcellularLocation>
</comment>
<comment type="miscellaneous">
    <text>Most taste cells may be activated by a limited number of bitter compounds; individual taste cells can discriminate among bitter stimuli.</text>
</comment>
<comment type="similarity">
    <text evidence="4">Belongs to the G-protein coupled receptor T2R family.</text>
</comment>
<gene>
    <name type="primary">TAS2R42</name>
    <name type="synonym">TAS2R55</name>
</gene>
<evidence type="ECO:0000250" key="1"/>
<evidence type="ECO:0000255" key="2"/>
<evidence type="ECO:0000269" key="3">
    <source>
    </source>
</evidence>
<evidence type="ECO:0000305" key="4"/>
<keyword id="KW-0297">G-protein coupled receptor</keyword>
<keyword id="KW-0325">Glycoprotein</keyword>
<keyword id="KW-0472">Membrane</keyword>
<keyword id="KW-0675">Receptor</keyword>
<keyword id="KW-1185">Reference proteome</keyword>
<keyword id="KW-0716">Sensory transduction</keyword>
<keyword id="KW-0919">Taste</keyword>
<keyword id="KW-0807">Transducer</keyword>
<keyword id="KW-0812">Transmembrane</keyword>
<keyword id="KW-1133">Transmembrane helix</keyword>
<protein>
    <recommendedName>
        <fullName>Taste receptor type 2 member 42</fullName>
        <shortName>T2R42</shortName>
    </recommendedName>
    <alternativeName>
        <fullName>Taste receptor type 2 member 55</fullName>
        <shortName>T2R55</shortName>
    </alternativeName>
</protein>
<dbReference type="EMBL" id="AY724953">
    <property type="protein sequence ID" value="AAU21149.1"/>
    <property type="molecule type" value="Genomic_DNA"/>
</dbReference>
<dbReference type="EMBL" id="AC010176">
    <property type="status" value="NOT_ANNOTATED_CDS"/>
    <property type="molecule type" value="Genomic_DNA"/>
</dbReference>
<dbReference type="EMBL" id="BC131742">
    <property type="protein sequence ID" value="AAI31743.1"/>
    <property type="molecule type" value="mRNA"/>
</dbReference>
<dbReference type="EMBL" id="BK001099">
    <property type="protein sequence ID" value="DAA01206.1"/>
    <property type="molecule type" value="Genomic_DNA"/>
</dbReference>
<dbReference type="CCDS" id="CCDS31747.1"/>
<dbReference type="RefSeq" id="NP_852094.2">
    <property type="nucleotide sequence ID" value="NM_181429.2"/>
</dbReference>
<dbReference type="SMR" id="Q7RTR8"/>
<dbReference type="FunCoup" id="Q7RTR8">
    <property type="interactions" value="163"/>
</dbReference>
<dbReference type="IntAct" id="Q7RTR8">
    <property type="interactions" value="10"/>
</dbReference>
<dbReference type="STRING" id="9606.ENSP00000334050"/>
<dbReference type="ChEMBL" id="CHEMBL4523360"/>
<dbReference type="DrugCentral" id="Q7RTR8"/>
<dbReference type="GlyCosmos" id="Q7RTR8">
    <property type="glycosylation" value="1 site, No reported glycans"/>
</dbReference>
<dbReference type="GlyGen" id="Q7RTR8">
    <property type="glycosylation" value="1 site"/>
</dbReference>
<dbReference type="BioMuta" id="TAS2R42"/>
<dbReference type="DMDM" id="55976719"/>
<dbReference type="jPOST" id="Q7RTR8"/>
<dbReference type="PaxDb" id="9606-ENSP00000334050"/>
<dbReference type="ProteomicsDB" id="68890"/>
<dbReference type="Antibodypedia" id="23426">
    <property type="antibodies" value="34 antibodies from 13 providers"/>
</dbReference>
<dbReference type="Ensembl" id="ENST00000334266.1">
    <property type="protein sequence ID" value="ENSP00000334050.1"/>
    <property type="gene ID" value="ENSG00000186136.1"/>
</dbReference>
<dbReference type="Ensembl" id="ENST00000619463.1">
    <property type="protein sequence ID" value="ENSP00000484611.1"/>
    <property type="gene ID" value="ENSG00000273505.1"/>
</dbReference>
<dbReference type="GeneID" id="353164"/>
<dbReference type="KEGG" id="hsa:353164"/>
<dbReference type="MANE-Select" id="ENST00000334266.1">
    <property type="protein sequence ID" value="ENSP00000334050.1"/>
    <property type="RefSeq nucleotide sequence ID" value="NM_181429.2"/>
    <property type="RefSeq protein sequence ID" value="NP_852094.2"/>
</dbReference>
<dbReference type="UCSC" id="uc031yun.1">
    <property type="organism name" value="human"/>
</dbReference>
<dbReference type="AGR" id="HGNC:18888"/>
<dbReference type="CTD" id="353164"/>
<dbReference type="GeneCards" id="TAS2R42"/>
<dbReference type="HGNC" id="HGNC:18888">
    <property type="gene designation" value="TAS2R42"/>
</dbReference>
<dbReference type="HPA" id="ENSG00000186136">
    <property type="expression patterns" value="Not detected"/>
</dbReference>
<dbReference type="MIM" id="613966">
    <property type="type" value="gene"/>
</dbReference>
<dbReference type="neXtProt" id="NX_Q7RTR8"/>
<dbReference type="PharmGKB" id="PA38741"/>
<dbReference type="VEuPathDB" id="HostDB:ENSG00000186136"/>
<dbReference type="eggNOG" id="ENOG502TCTX">
    <property type="taxonomic scope" value="Eukaryota"/>
</dbReference>
<dbReference type="GeneTree" id="ENSGT01100000263477"/>
<dbReference type="HOGENOM" id="CLU_072337_2_0_1"/>
<dbReference type="InParanoid" id="Q7RTR8"/>
<dbReference type="OMA" id="YVFPSGH"/>
<dbReference type="OrthoDB" id="8876749at2759"/>
<dbReference type="PAN-GO" id="Q7RTR8">
    <property type="GO annotations" value="1 GO annotation based on evolutionary models"/>
</dbReference>
<dbReference type="PhylomeDB" id="Q7RTR8"/>
<dbReference type="TreeFam" id="TF335891"/>
<dbReference type="PathwayCommons" id="Q7RTR8"/>
<dbReference type="Reactome" id="R-HSA-418594">
    <property type="pathway name" value="G alpha (i) signalling events"/>
</dbReference>
<dbReference type="Reactome" id="R-HSA-420499">
    <property type="pathway name" value="Class C/3 (Metabotropic glutamate/pheromone receptors)"/>
</dbReference>
<dbReference type="Pharos" id="Q7RTR8">
    <property type="development level" value="Tchem"/>
</dbReference>
<dbReference type="PRO" id="PR:Q7RTR8"/>
<dbReference type="Proteomes" id="UP000005640">
    <property type="component" value="Chromosome 12"/>
</dbReference>
<dbReference type="RNAct" id="Q7RTR8">
    <property type="molecule type" value="protein"/>
</dbReference>
<dbReference type="Bgee" id="ENSG00000186136">
    <property type="expression patterns" value="Expressed in male germ line stem cell (sensu Vertebrata) in testis and 13 other cell types or tissues"/>
</dbReference>
<dbReference type="GO" id="GO:0016020">
    <property type="term" value="C:membrane"/>
    <property type="evidence" value="ECO:0000314"/>
    <property type="project" value="UniProtKB"/>
</dbReference>
<dbReference type="GO" id="GO:0005886">
    <property type="term" value="C:plasma membrane"/>
    <property type="evidence" value="ECO:0000304"/>
    <property type="project" value="Reactome"/>
</dbReference>
<dbReference type="GO" id="GO:0004930">
    <property type="term" value="F:G protein-coupled receptor activity"/>
    <property type="evidence" value="ECO:0007669"/>
    <property type="project" value="UniProtKB-KW"/>
</dbReference>
<dbReference type="GO" id="GO:0050909">
    <property type="term" value="P:sensory perception of taste"/>
    <property type="evidence" value="ECO:0007669"/>
    <property type="project" value="UniProtKB-KW"/>
</dbReference>
<dbReference type="CDD" id="cd15024">
    <property type="entry name" value="7tm_TAS2R42"/>
    <property type="match status" value="1"/>
</dbReference>
<dbReference type="FunFam" id="1.20.1070.10:FF:000042">
    <property type="entry name" value="Taste receptor type 2 member 7"/>
    <property type="match status" value="1"/>
</dbReference>
<dbReference type="Gene3D" id="1.20.1070.10">
    <property type="entry name" value="Rhodopsin 7-helix transmembrane proteins"/>
    <property type="match status" value="1"/>
</dbReference>
<dbReference type="InterPro" id="IPR017452">
    <property type="entry name" value="GPCR_Rhodpsn_7TM"/>
</dbReference>
<dbReference type="InterPro" id="IPR007960">
    <property type="entry name" value="TAS2R"/>
</dbReference>
<dbReference type="PANTHER" id="PTHR11394">
    <property type="entry name" value="TASTE RECEPTOR TYPE 2"/>
    <property type="match status" value="1"/>
</dbReference>
<dbReference type="PANTHER" id="PTHR11394:SF70">
    <property type="entry name" value="TASTE RECEPTOR TYPE 2 MEMBER 42"/>
    <property type="match status" value="1"/>
</dbReference>
<dbReference type="Pfam" id="PF05296">
    <property type="entry name" value="TAS2R"/>
    <property type="match status" value="1"/>
</dbReference>
<dbReference type="SUPFAM" id="SSF81321">
    <property type="entry name" value="Family A G protein-coupled receptor-like"/>
    <property type="match status" value="1"/>
</dbReference>
<dbReference type="PROSITE" id="PS50262">
    <property type="entry name" value="G_PROTEIN_RECEP_F1_2"/>
    <property type="match status" value="1"/>
</dbReference>
<sequence>MATELDKIFLILAIAEFIISMLGNVFIGLVNCSEGIKNQKVFSADFILTCLAISTIGQLLVILFDSFLVGLASHLYTTYRLGKTVIMLWHMTNHLTTWLATCLSIFYFFKIAHFPHSLFLWLRWRMNGMIVMLLILSLFLLIFDSLVLEIFIDISLNIIDKSNLTLYLDESKTLYDKLSILKTLLSLTSFIPFSLFLTSLLFLFLSLVRHTRNLKLSSLGSRDSSTEAHRRAMKMVMSFLFLFIVHFFSLQVANWIFFMLWNNKCIKFVMLALNAFPSCHSFILILGNSKLQQTAVRLLWHLRNYTKTPNPLPL</sequence>
<feature type="chain" id="PRO_0000082344" description="Taste receptor type 2 member 42">
    <location>
        <begin position="1"/>
        <end position="314"/>
    </location>
</feature>
<feature type="topological domain" description="Extracellular" evidence="2">
    <location>
        <begin position="1"/>
        <end position="7"/>
    </location>
</feature>
<feature type="transmembrane region" description="Helical; Name=1" evidence="2">
    <location>
        <begin position="8"/>
        <end position="28"/>
    </location>
</feature>
<feature type="topological domain" description="Cytoplasmic" evidence="2">
    <location>
        <begin position="29"/>
        <end position="50"/>
    </location>
</feature>
<feature type="transmembrane region" description="Helical; Name=2" evidence="2">
    <location>
        <begin position="51"/>
        <end position="71"/>
    </location>
</feature>
<feature type="topological domain" description="Extracellular" evidence="2">
    <location>
        <begin position="72"/>
        <end position="101"/>
    </location>
</feature>
<feature type="transmembrane region" description="Helical; Name=4" evidence="2">
    <location>
        <begin position="102"/>
        <end position="122"/>
    </location>
</feature>
<feature type="topological domain" description="Cytoplasmic" evidence="2">
    <location>
        <begin position="123"/>
        <end position="127"/>
    </location>
</feature>
<feature type="transmembrane region" description="Helical; Name=3" evidence="2">
    <location>
        <begin position="128"/>
        <end position="148"/>
    </location>
</feature>
<feature type="topological domain" description="Extracellular" evidence="2">
    <location>
        <begin position="149"/>
        <end position="187"/>
    </location>
</feature>
<feature type="transmembrane region" description="Helical; Name=5" evidence="2">
    <location>
        <begin position="188"/>
        <end position="208"/>
    </location>
</feature>
<feature type="topological domain" description="Cytoplasmic" evidence="2">
    <location>
        <begin position="209"/>
        <end position="238"/>
    </location>
</feature>
<feature type="transmembrane region" description="Helical; Name=6" evidence="2">
    <location>
        <begin position="239"/>
        <end position="259"/>
    </location>
</feature>
<feature type="topological domain" description="Extracellular" evidence="2">
    <location>
        <begin position="260"/>
        <end position="265"/>
    </location>
</feature>
<feature type="transmembrane region" description="Helical; Name=7" evidence="2">
    <location>
        <begin position="266"/>
        <end position="286"/>
    </location>
</feature>
<feature type="topological domain" description="Cytoplasmic" evidence="2">
    <location>
        <begin position="287"/>
        <end position="314"/>
    </location>
</feature>
<feature type="glycosylation site" description="N-linked (GlcNAc...) asparagine" evidence="2">
    <location>
        <position position="163"/>
    </location>
</feature>
<feature type="sequence variant" id="VAR_062086" description="In dbSNP:rs35969491." evidence="3">
    <original>Y</original>
    <variation>F</variation>
    <location>
        <position position="175"/>
    </location>
</feature>
<feature type="sequence variant" id="VAR_053352" description="In dbSNP:rs5020531." evidence="3">
    <original>F</original>
    <variation>S</variation>
    <location>
        <position position="196"/>
    </location>
</feature>
<feature type="sequence variant" id="VAR_062087" description="In dbSNP:rs1669413.">
    <original>W</original>
    <variation>G</variation>
    <location>
        <position position="255"/>
    </location>
</feature>
<feature type="sequence variant" id="VAR_053353" description="In dbSNP:rs1451772.">
    <original>C</original>
    <variation>Y</variation>
    <location>
        <position position="265"/>
    </location>
</feature>
<feature type="sequence variant" id="VAR_062088" description="In dbSNP:rs1669412.">
    <original>Q</original>
    <variation>R</variation>
    <location>
        <position position="292"/>
    </location>
</feature>
<feature type="sequence variant" id="VAR_062089" description="In dbSNP:rs1650017.">
    <original>P</original>
    <variation>A</variation>
    <location>
        <position position="311"/>
    </location>
</feature>
<proteinExistence type="evidence at transcript level"/>
<organism>
    <name type="scientific">Homo sapiens</name>
    <name type="common">Human</name>
    <dbReference type="NCBI Taxonomy" id="9606"/>
    <lineage>
        <taxon>Eukaryota</taxon>
        <taxon>Metazoa</taxon>
        <taxon>Chordata</taxon>
        <taxon>Craniata</taxon>
        <taxon>Vertebrata</taxon>
        <taxon>Euteleostomi</taxon>
        <taxon>Mammalia</taxon>
        <taxon>Eutheria</taxon>
        <taxon>Euarchontoglires</taxon>
        <taxon>Primates</taxon>
        <taxon>Haplorrhini</taxon>
        <taxon>Catarrhini</taxon>
        <taxon>Hominidae</taxon>
        <taxon>Homo</taxon>
    </lineage>
</organism>
<name>T2R42_HUMAN</name>